<dbReference type="EC" id="6.1.1.5"/>
<dbReference type="EMBL" id="CU329672">
    <property type="protein sequence ID" value="CAB52155.1"/>
    <property type="molecule type" value="Genomic_DNA"/>
</dbReference>
<dbReference type="PIR" id="T41201">
    <property type="entry name" value="T41201"/>
</dbReference>
<dbReference type="RefSeq" id="NP_587938.1">
    <property type="nucleotide sequence ID" value="NM_001022929.2"/>
</dbReference>
<dbReference type="SMR" id="Q9USL3"/>
<dbReference type="FunCoup" id="Q9USL3">
    <property type="interactions" value="528"/>
</dbReference>
<dbReference type="STRING" id="284812.Q9USL3"/>
<dbReference type="iPTMnet" id="Q9USL3"/>
<dbReference type="PaxDb" id="4896-SPCC18B5.08c.1"/>
<dbReference type="EnsemblFungi" id="SPCC18B5.08c.1">
    <property type="protein sequence ID" value="SPCC18B5.08c.1:pep"/>
    <property type="gene ID" value="SPCC18B5.08c"/>
</dbReference>
<dbReference type="GeneID" id="2539323"/>
<dbReference type="KEGG" id="spo:2539323"/>
<dbReference type="PomBase" id="SPCC18B5.08c">
    <property type="gene designation" value="ism1"/>
</dbReference>
<dbReference type="VEuPathDB" id="FungiDB:SPCC18B5.08c"/>
<dbReference type="eggNOG" id="KOG0433">
    <property type="taxonomic scope" value="Eukaryota"/>
</dbReference>
<dbReference type="HOGENOM" id="CLU_001493_7_2_1"/>
<dbReference type="InParanoid" id="Q9USL3"/>
<dbReference type="OMA" id="HCWRCKT"/>
<dbReference type="PhylomeDB" id="Q9USL3"/>
<dbReference type="Reactome" id="R-SPO-9837999">
    <property type="pathway name" value="Mitochondrial protein degradation"/>
</dbReference>
<dbReference type="PRO" id="PR:Q9USL3"/>
<dbReference type="Proteomes" id="UP000002485">
    <property type="component" value="Chromosome III"/>
</dbReference>
<dbReference type="GO" id="GO:0005829">
    <property type="term" value="C:cytosol"/>
    <property type="evidence" value="ECO:0007005"/>
    <property type="project" value="PomBase"/>
</dbReference>
<dbReference type="GO" id="GO:0005759">
    <property type="term" value="C:mitochondrial matrix"/>
    <property type="evidence" value="ECO:0000305"/>
    <property type="project" value="PomBase"/>
</dbReference>
<dbReference type="GO" id="GO:0005739">
    <property type="term" value="C:mitochondrion"/>
    <property type="evidence" value="ECO:0000318"/>
    <property type="project" value="GO_Central"/>
</dbReference>
<dbReference type="GO" id="GO:0002161">
    <property type="term" value="F:aminoacyl-tRNA deacylase activity"/>
    <property type="evidence" value="ECO:0007669"/>
    <property type="project" value="InterPro"/>
</dbReference>
<dbReference type="GO" id="GO:0005524">
    <property type="term" value="F:ATP binding"/>
    <property type="evidence" value="ECO:0000255"/>
    <property type="project" value="PomBase"/>
</dbReference>
<dbReference type="GO" id="GO:0004822">
    <property type="term" value="F:isoleucine-tRNA ligase activity"/>
    <property type="evidence" value="ECO:0000318"/>
    <property type="project" value="GO_Central"/>
</dbReference>
<dbReference type="GO" id="GO:0000049">
    <property type="term" value="F:tRNA binding"/>
    <property type="evidence" value="ECO:0007669"/>
    <property type="project" value="InterPro"/>
</dbReference>
<dbReference type="GO" id="GO:0006428">
    <property type="term" value="P:isoleucyl-tRNA aminoacylation"/>
    <property type="evidence" value="ECO:0000318"/>
    <property type="project" value="GO_Central"/>
</dbReference>
<dbReference type="GO" id="GO:0032543">
    <property type="term" value="P:mitochondrial translation"/>
    <property type="evidence" value="ECO:0000318"/>
    <property type="project" value="GO_Central"/>
</dbReference>
<dbReference type="CDD" id="cd07960">
    <property type="entry name" value="Anticodon_Ia_Ile_BEm"/>
    <property type="match status" value="1"/>
</dbReference>
<dbReference type="CDD" id="cd00818">
    <property type="entry name" value="IleRS_core"/>
    <property type="match status" value="1"/>
</dbReference>
<dbReference type="FunFam" id="3.40.50.620:FF:000111">
    <property type="entry name" value="Mitochondrial isoleucyl-tRNA synthetase"/>
    <property type="match status" value="1"/>
</dbReference>
<dbReference type="Gene3D" id="1.10.730.20">
    <property type="match status" value="1"/>
</dbReference>
<dbReference type="Gene3D" id="3.40.50.620">
    <property type="entry name" value="HUPs"/>
    <property type="match status" value="2"/>
</dbReference>
<dbReference type="Gene3D" id="3.90.740.10">
    <property type="entry name" value="Valyl/Leucyl/Isoleucyl-tRNA synthetase, editing domain"/>
    <property type="match status" value="1"/>
</dbReference>
<dbReference type="HAMAP" id="MF_02002">
    <property type="entry name" value="Ile_tRNA_synth_type1"/>
    <property type="match status" value="1"/>
</dbReference>
<dbReference type="InterPro" id="IPR001412">
    <property type="entry name" value="aa-tRNA-synth_I_CS"/>
</dbReference>
<dbReference type="InterPro" id="IPR002300">
    <property type="entry name" value="aa-tRNA-synth_Ia"/>
</dbReference>
<dbReference type="InterPro" id="IPR033708">
    <property type="entry name" value="Anticodon_Ile_BEm"/>
</dbReference>
<dbReference type="InterPro" id="IPR002301">
    <property type="entry name" value="Ile-tRNA-ligase"/>
</dbReference>
<dbReference type="InterPro" id="IPR023585">
    <property type="entry name" value="Ile-tRNA-ligase_type1"/>
</dbReference>
<dbReference type="InterPro" id="IPR050081">
    <property type="entry name" value="Ile-tRNA_ligase"/>
</dbReference>
<dbReference type="InterPro" id="IPR013155">
    <property type="entry name" value="M/V/L/I-tRNA-synth_anticd-bd"/>
</dbReference>
<dbReference type="InterPro" id="IPR014729">
    <property type="entry name" value="Rossmann-like_a/b/a_fold"/>
</dbReference>
<dbReference type="InterPro" id="IPR009080">
    <property type="entry name" value="tRNAsynth_Ia_anticodon-bd"/>
</dbReference>
<dbReference type="InterPro" id="IPR009008">
    <property type="entry name" value="Val/Leu/Ile-tRNA-synth_edit"/>
</dbReference>
<dbReference type="NCBIfam" id="TIGR00392">
    <property type="entry name" value="ileS"/>
    <property type="match status" value="1"/>
</dbReference>
<dbReference type="PANTHER" id="PTHR42765:SF1">
    <property type="entry name" value="ISOLEUCINE--TRNA LIGASE, MITOCHONDRIAL"/>
    <property type="match status" value="1"/>
</dbReference>
<dbReference type="PANTHER" id="PTHR42765">
    <property type="entry name" value="SOLEUCYL-TRNA SYNTHETASE"/>
    <property type="match status" value="1"/>
</dbReference>
<dbReference type="Pfam" id="PF08264">
    <property type="entry name" value="Anticodon_1"/>
    <property type="match status" value="1"/>
</dbReference>
<dbReference type="Pfam" id="PF00133">
    <property type="entry name" value="tRNA-synt_1"/>
    <property type="match status" value="1"/>
</dbReference>
<dbReference type="PRINTS" id="PR00984">
    <property type="entry name" value="TRNASYNTHILE"/>
</dbReference>
<dbReference type="SUPFAM" id="SSF47323">
    <property type="entry name" value="Anticodon-binding domain of a subclass of class I aminoacyl-tRNA synthetases"/>
    <property type="match status" value="1"/>
</dbReference>
<dbReference type="SUPFAM" id="SSF52374">
    <property type="entry name" value="Nucleotidylyl transferase"/>
    <property type="match status" value="1"/>
</dbReference>
<dbReference type="SUPFAM" id="SSF50677">
    <property type="entry name" value="ValRS/IleRS/LeuRS editing domain"/>
    <property type="match status" value="1"/>
</dbReference>
<dbReference type="PROSITE" id="PS00178">
    <property type="entry name" value="AA_TRNA_LIGASE_I"/>
    <property type="match status" value="1"/>
</dbReference>
<organism>
    <name type="scientific">Schizosaccharomyces pombe (strain 972 / ATCC 24843)</name>
    <name type="common">Fission yeast</name>
    <dbReference type="NCBI Taxonomy" id="284812"/>
    <lineage>
        <taxon>Eukaryota</taxon>
        <taxon>Fungi</taxon>
        <taxon>Dikarya</taxon>
        <taxon>Ascomycota</taxon>
        <taxon>Taphrinomycotina</taxon>
        <taxon>Schizosaccharomycetes</taxon>
        <taxon>Schizosaccharomycetales</taxon>
        <taxon>Schizosaccharomycetaceae</taxon>
        <taxon>Schizosaccharomyces</taxon>
    </lineage>
</organism>
<protein>
    <recommendedName>
        <fullName>Isoleucine--tRNA ligase, mitochondrial</fullName>
        <ecNumber>6.1.1.5</ecNumber>
    </recommendedName>
    <alternativeName>
        <fullName>Isoleucyl-tRNA synthetase</fullName>
        <shortName>IleRS</shortName>
    </alternativeName>
</protein>
<proteinExistence type="inferred from homology"/>
<keyword id="KW-0030">Aminoacyl-tRNA synthetase</keyword>
<keyword id="KW-0067">ATP-binding</keyword>
<keyword id="KW-0963">Cytoplasm</keyword>
<keyword id="KW-0436">Ligase</keyword>
<keyword id="KW-0496">Mitochondrion</keyword>
<keyword id="KW-0547">Nucleotide-binding</keyword>
<keyword id="KW-0648">Protein biosynthesis</keyword>
<keyword id="KW-1185">Reference proteome</keyword>
<accession>Q9USL3</accession>
<feature type="chain" id="PRO_0000339654" description="Isoleucine--tRNA ligase, mitochondrial">
    <location>
        <begin position="1"/>
        <end position="973"/>
    </location>
</feature>
<feature type="short sequence motif" description="'HIGH' region" evidence="1">
    <location>
        <begin position="87"/>
        <end position="97"/>
    </location>
</feature>
<feature type="short sequence motif" description="'KMSKS' region" evidence="1">
    <location>
        <begin position="625"/>
        <end position="629"/>
    </location>
</feature>
<feature type="binding site" evidence="1">
    <location>
        <position position="628"/>
    </location>
    <ligand>
        <name>ATP</name>
        <dbReference type="ChEBI" id="CHEBI:30616"/>
    </ligand>
</feature>
<reference key="1">
    <citation type="journal article" date="2002" name="Nature">
        <title>The genome sequence of Schizosaccharomyces pombe.</title>
        <authorList>
            <person name="Wood V."/>
            <person name="Gwilliam R."/>
            <person name="Rajandream M.A."/>
            <person name="Lyne M.H."/>
            <person name="Lyne R."/>
            <person name="Stewart A."/>
            <person name="Sgouros J.G."/>
            <person name="Peat N."/>
            <person name="Hayles J."/>
            <person name="Baker S.G."/>
            <person name="Basham D."/>
            <person name="Bowman S."/>
            <person name="Brooks K."/>
            <person name="Brown D."/>
            <person name="Brown S."/>
            <person name="Chillingworth T."/>
            <person name="Churcher C.M."/>
            <person name="Collins M."/>
            <person name="Connor R."/>
            <person name="Cronin A."/>
            <person name="Davis P."/>
            <person name="Feltwell T."/>
            <person name="Fraser A."/>
            <person name="Gentles S."/>
            <person name="Goble A."/>
            <person name="Hamlin N."/>
            <person name="Harris D.E."/>
            <person name="Hidalgo J."/>
            <person name="Hodgson G."/>
            <person name="Holroyd S."/>
            <person name="Hornsby T."/>
            <person name="Howarth S."/>
            <person name="Huckle E.J."/>
            <person name="Hunt S."/>
            <person name="Jagels K."/>
            <person name="James K.D."/>
            <person name="Jones L."/>
            <person name="Jones M."/>
            <person name="Leather S."/>
            <person name="McDonald S."/>
            <person name="McLean J."/>
            <person name="Mooney P."/>
            <person name="Moule S."/>
            <person name="Mungall K.L."/>
            <person name="Murphy L.D."/>
            <person name="Niblett D."/>
            <person name="Odell C."/>
            <person name="Oliver K."/>
            <person name="O'Neil S."/>
            <person name="Pearson D."/>
            <person name="Quail M.A."/>
            <person name="Rabbinowitsch E."/>
            <person name="Rutherford K.M."/>
            <person name="Rutter S."/>
            <person name="Saunders D."/>
            <person name="Seeger K."/>
            <person name="Sharp S."/>
            <person name="Skelton J."/>
            <person name="Simmonds M.N."/>
            <person name="Squares R."/>
            <person name="Squares S."/>
            <person name="Stevens K."/>
            <person name="Taylor K."/>
            <person name="Taylor R.G."/>
            <person name="Tivey A."/>
            <person name="Walsh S.V."/>
            <person name="Warren T."/>
            <person name="Whitehead S."/>
            <person name="Woodward J.R."/>
            <person name="Volckaert G."/>
            <person name="Aert R."/>
            <person name="Robben J."/>
            <person name="Grymonprez B."/>
            <person name="Weltjens I."/>
            <person name="Vanstreels E."/>
            <person name="Rieger M."/>
            <person name="Schaefer M."/>
            <person name="Mueller-Auer S."/>
            <person name="Gabel C."/>
            <person name="Fuchs M."/>
            <person name="Duesterhoeft A."/>
            <person name="Fritzc C."/>
            <person name="Holzer E."/>
            <person name="Moestl D."/>
            <person name="Hilbert H."/>
            <person name="Borzym K."/>
            <person name="Langer I."/>
            <person name="Beck A."/>
            <person name="Lehrach H."/>
            <person name="Reinhardt R."/>
            <person name="Pohl T.M."/>
            <person name="Eger P."/>
            <person name="Zimmermann W."/>
            <person name="Wedler H."/>
            <person name="Wambutt R."/>
            <person name="Purnelle B."/>
            <person name="Goffeau A."/>
            <person name="Cadieu E."/>
            <person name="Dreano S."/>
            <person name="Gloux S."/>
            <person name="Lelaure V."/>
            <person name="Mottier S."/>
            <person name="Galibert F."/>
            <person name="Aves S.J."/>
            <person name="Xiang Z."/>
            <person name="Hunt C."/>
            <person name="Moore K."/>
            <person name="Hurst S.M."/>
            <person name="Lucas M."/>
            <person name="Rochet M."/>
            <person name="Gaillardin C."/>
            <person name="Tallada V.A."/>
            <person name="Garzon A."/>
            <person name="Thode G."/>
            <person name="Daga R.R."/>
            <person name="Cruzado L."/>
            <person name="Jimenez J."/>
            <person name="Sanchez M."/>
            <person name="del Rey F."/>
            <person name="Benito J."/>
            <person name="Dominguez A."/>
            <person name="Revuelta J.L."/>
            <person name="Moreno S."/>
            <person name="Armstrong J."/>
            <person name="Forsburg S.L."/>
            <person name="Cerutti L."/>
            <person name="Lowe T."/>
            <person name="McCombie W.R."/>
            <person name="Paulsen I."/>
            <person name="Potashkin J."/>
            <person name="Shpakovski G.V."/>
            <person name="Ussery D."/>
            <person name="Barrell B.G."/>
            <person name="Nurse P."/>
        </authorList>
    </citation>
    <scope>NUCLEOTIDE SEQUENCE [LARGE SCALE GENOMIC DNA]</scope>
    <source>
        <strain>972 / ATCC 24843</strain>
    </source>
</reference>
<reference key="2">
    <citation type="journal article" date="2006" name="Nat. Biotechnol.">
        <title>ORFeome cloning and global analysis of protein localization in the fission yeast Schizosaccharomyces pombe.</title>
        <authorList>
            <person name="Matsuyama A."/>
            <person name="Arai R."/>
            <person name="Yashiroda Y."/>
            <person name="Shirai A."/>
            <person name="Kamata A."/>
            <person name="Sekido S."/>
            <person name="Kobayashi Y."/>
            <person name="Hashimoto A."/>
            <person name="Hamamoto M."/>
            <person name="Hiraoka Y."/>
            <person name="Horinouchi S."/>
            <person name="Yoshida M."/>
        </authorList>
    </citation>
    <scope>SUBCELLULAR LOCATION [LARGE SCALE ANALYSIS]</scope>
</reference>
<name>SYIM_SCHPO</name>
<gene>
    <name type="primary">ism1</name>
    <name type="ORF">SPCC18B5.08c</name>
</gene>
<evidence type="ECO:0000250" key="1"/>
<evidence type="ECO:0000269" key="2">
    <source>
    </source>
</evidence>
<evidence type="ECO:0000305" key="3"/>
<sequence length="973" mass="111255">MKFSYISSLPKGHNHICCKQAGRFLSSQADLKKYSESLCLPKTSFPIKPNVKGNNEKYFKSITSDLYEWQKENLNKEDSFVLLDGPPFANGRLHIGHALNKILKDIINRWQLLKGRSVHYVPGWDCHGLPIESKAIKANAERKSSLEIRKIAKDFANSAVQEQLMMFQRMAVMGDWPSRYITMSDKFEIAELKVFLSLLQKDLIFRQNKPVYWSSSSRSALAESEIEYDDNHVSTSIYFTFPVNSFSIDGCEYNNVKALVWTTTPWTIPSNLALSYHPEINYGLYQHNNSIYLMSDNLVPNLDFMQGAKRLASCPSDIISSFTYENPLLPKQSFPFLQSNYVTNDIGTGIVHVAPGHGMEDYLLGLENNLRPFSPLDDYGRYTKEALDGSLEGLEVLGDGGKKVISIMKNQNMIVKVSPYKHRYPYDWRTHKPLILRATPQWFISLENERKTAIKALDSVKMIPPNSRARLLGFLNGRPEWCISRQRAWGLPIPVLYEKGTKIPLLTVKSVSYIIEKMEVEGVDSWFNDTENNGHAQWVHPDYRNKEYIRGTETLDVWFDSGTSWTTIAPRKNKPLIDLCLEGSDQHRGWFQSLLLTYTAYQSKPEAPFSTLFTHGFIFDERGQKQSKSLGNVTDPEDVINGKLLKGKKLPYGVDLLRLWVASCDSTNDTNLGPNILTQVGESLKKWRLTSRFCLGNLHDWNTSSSVDVGELRGIDKLALVQLDKFQTEIRELYESYSINKVVHHLNYFMNSFLSSTYFDAVKDRLYADLPNSVSRRSVQTVLYHSLLTLIWAISPITPLLAQEIWQSLPDSYLNSSYQTPFHAGETHLISSLRSKVDLLDRKFLIKEYLVLQQLKYSINLLITAARENLTIKNSLEAYVVIKSKSQSLLSFLKNYSSDLPFLFNTSKVFINEIPENLKLASVTQPEVQLDYGVANISLFFSNQQKCLRCWMHTAHEDGLCDRCESVLAQLKR</sequence>
<comment type="catalytic activity">
    <reaction>
        <text>tRNA(Ile) + L-isoleucine + ATP = L-isoleucyl-tRNA(Ile) + AMP + diphosphate</text>
        <dbReference type="Rhea" id="RHEA:11060"/>
        <dbReference type="Rhea" id="RHEA-COMP:9666"/>
        <dbReference type="Rhea" id="RHEA-COMP:9695"/>
        <dbReference type="ChEBI" id="CHEBI:30616"/>
        <dbReference type="ChEBI" id="CHEBI:33019"/>
        <dbReference type="ChEBI" id="CHEBI:58045"/>
        <dbReference type="ChEBI" id="CHEBI:78442"/>
        <dbReference type="ChEBI" id="CHEBI:78528"/>
        <dbReference type="ChEBI" id="CHEBI:456215"/>
        <dbReference type="EC" id="6.1.1.5"/>
    </reaction>
</comment>
<comment type="subcellular location">
    <subcellularLocation>
        <location evidence="2">Cytoplasm</location>
    </subcellularLocation>
    <subcellularLocation>
        <location evidence="1">Mitochondrion matrix</location>
    </subcellularLocation>
</comment>
<comment type="similarity">
    <text evidence="3">Belongs to the class-I aminoacyl-tRNA synthetase family.</text>
</comment>